<organism>
    <name type="scientific">Picea abies</name>
    <name type="common">Norway spruce</name>
    <name type="synonym">Picea excelsa</name>
    <dbReference type="NCBI Taxonomy" id="3329"/>
    <lineage>
        <taxon>Eukaryota</taxon>
        <taxon>Viridiplantae</taxon>
        <taxon>Streptophyta</taxon>
        <taxon>Embryophyta</taxon>
        <taxon>Tracheophyta</taxon>
        <taxon>Spermatophyta</taxon>
        <taxon>Pinopsida</taxon>
        <taxon>Pinidae</taxon>
        <taxon>Conifers I</taxon>
        <taxon>Pinales</taxon>
        <taxon>Pinaceae</taxon>
        <taxon>Picea</taxon>
    </lineage>
</organism>
<name>CADH7_PICAB</name>
<evidence type="ECO:0000250" key="1">
    <source>
        <dbReference type="UniProtKB" id="O49482"/>
    </source>
</evidence>
<evidence type="ECO:0000305" key="2"/>
<accession>Q08350</accession>
<keyword id="KW-0438">Lignin biosynthesis</keyword>
<keyword id="KW-0479">Metal-binding</keyword>
<keyword id="KW-0521">NADP</keyword>
<keyword id="KW-0560">Oxidoreductase</keyword>
<keyword id="KW-0862">Zinc</keyword>
<comment type="function">
    <text evidence="1">Involved in lignin biosynthesis. Catalyzes the final step specific for the production of lignin monomers. Catalyzes the NADPH-dependent reduction of coniferaldehyde, 5-hydroxyconiferaldehyde, sinapaldehyde, 4-coumaraldehyde and caffeyl aldehyde to their respective alcohols.</text>
</comment>
<comment type="catalytic activity">
    <reaction evidence="1">
        <text>(E)-cinnamyl alcohol + NADP(+) = (E)-cinnamaldehyde + NADPH + H(+)</text>
        <dbReference type="Rhea" id="RHEA:10392"/>
        <dbReference type="ChEBI" id="CHEBI:15378"/>
        <dbReference type="ChEBI" id="CHEBI:16731"/>
        <dbReference type="ChEBI" id="CHEBI:33227"/>
        <dbReference type="ChEBI" id="CHEBI:57783"/>
        <dbReference type="ChEBI" id="CHEBI:58349"/>
        <dbReference type="EC" id="1.1.1.195"/>
    </reaction>
    <physiologicalReaction direction="right-to-left" evidence="1">
        <dbReference type="Rhea" id="RHEA:10394"/>
    </physiologicalReaction>
</comment>
<comment type="catalytic activity">
    <reaction evidence="1">
        <text>(E)-coniferol + NADP(+) = (E)-coniferaldehyde + NADPH + H(+)</text>
        <dbReference type="Rhea" id="RHEA:22444"/>
        <dbReference type="ChEBI" id="CHEBI:15378"/>
        <dbReference type="ChEBI" id="CHEBI:16547"/>
        <dbReference type="ChEBI" id="CHEBI:17745"/>
        <dbReference type="ChEBI" id="CHEBI:57783"/>
        <dbReference type="ChEBI" id="CHEBI:58349"/>
        <dbReference type="EC" id="1.1.1.195"/>
    </reaction>
    <physiologicalReaction direction="right-to-left" evidence="1">
        <dbReference type="Rhea" id="RHEA:22446"/>
    </physiologicalReaction>
</comment>
<comment type="catalytic activity">
    <reaction evidence="1">
        <text>(E)-sinapyl alcohol + NADP(+) = (E)-sinapaldehyde + NADPH + H(+)</text>
        <dbReference type="Rhea" id="RHEA:45704"/>
        <dbReference type="ChEBI" id="CHEBI:15378"/>
        <dbReference type="ChEBI" id="CHEBI:27949"/>
        <dbReference type="ChEBI" id="CHEBI:57783"/>
        <dbReference type="ChEBI" id="CHEBI:58349"/>
        <dbReference type="ChEBI" id="CHEBI:64557"/>
        <dbReference type="EC" id="1.1.1.195"/>
    </reaction>
    <physiologicalReaction direction="right-to-left" evidence="1">
        <dbReference type="Rhea" id="RHEA:45706"/>
    </physiologicalReaction>
</comment>
<comment type="catalytic activity">
    <reaction evidence="1">
        <text>(E)-4-coumaroyl alcohol + NADP(+) = (E)-4-coumaraldehyde + NADPH + H(+)</text>
        <dbReference type="Rhea" id="RHEA:45724"/>
        <dbReference type="ChEBI" id="CHEBI:15378"/>
        <dbReference type="ChEBI" id="CHEBI:28353"/>
        <dbReference type="ChEBI" id="CHEBI:57783"/>
        <dbReference type="ChEBI" id="CHEBI:58349"/>
        <dbReference type="ChEBI" id="CHEBI:64555"/>
        <dbReference type="EC" id="1.1.1.195"/>
    </reaction>
    <physiologicalReaction direction="right-to-left" evidence="1">
        <dbReference type="Rhea" id="RHEA:45726"/>
    </physiologicalReaction>
</comment>
<comment type="catalytic activity">
    <reaction evidence="1">
        <text>(E)-caffeyl alcohol + NADP(+) = (E)-caffeyl aldehyde + NADPH + H(+)</text>
        <dbReference type="Rhea" id="RHEA:45728"/>
        <dbReference type="ChEBI" id="CHEBI:15378"/>
        <dbReference type="ChEBI" id="CHEBI:28323"/>
        <dbReference type="ChEBI" id="CHEBI:31334"/>
        <dbReference type="ChEBI" id="CHEBI:57783"/>
        <dbReference type="ChEBI" id="CHEBI:58349"/>
    </reaction>
    <physiologicalReaction direction="right-to-left" evidence="1">
        <dbReference type="Rhea" id="RHEA:45730"/>
    </physiologicalReaction>
</comment>
<comment type="cofactor">
    <cofactor evidence="1">
        <name>Zn(2+)</name>
        <dbReference type="ChEBI" id="CHEBI:29105"/>
    </cofactor>
    <text evidence="1">Binds 2 Zn(2+) ions per subunit.</text>
</comment>
<comment type="pathway">
    <text evidence="1">Aromatic compound metabolism; phenylpropanoid biosynthesis.</text>
</comment>
<comment type="subunit">
    <text evidence="1">Homodimer.</text>
</comment>
<comment type="similarity">
    <text evidence="2">Belongs to the zinc-containing alcohol dehydrogenase family.</text>
</comment>
<gene>
    <name type="primary">CAD7</name>
</gene>
<gene>
    <name type="primary">CAD8</name>
</gene>
<proteinExistence type="evidence at transcript level"/>
<dbReference type="EC" id="1.1.1.195" evidence="1"/>
<dbReference type="EMBL" id="X72675">
    <property type="protein sequence ID" value="CAA51226.1"/>
    <property type="molecule type" value="mRNA"/>
</dbReference>
<dbReference type="EMBL" id="AJ001925">
    <property type="protein sequence ID" value="CAA05096.1"/>
    <property type="molecule type" value="Genomic_DNA"/>
</dbReference>
<dbReference type="EMBL" id="AJ001926">
    <property type="protein sequence ID" value="CAA05097.1"/>
    <property type="molecule type" value="Genomic_DNA"/>
</dbReference>
<dbReference type="PIR" id="S39509">
    <property type="entry name" value="S39509"/>
</dbReference>
<dbReference type="SMR" id="Q08350"/>
<dbReference type="UniPathway" id="UPA00711"/>
<dbReference type="GO" id="GO:0045551">
    <property type="term" value="F:cinnamyl-alcohol dehydrogenase activity"/>
    <property type="evidence" value="ECO:0007669"/>
    <property type="project" value="UniProtKB-EC"/>
</dbReference>
<dbReference type="GO" id="GO:0050268">
    <property type="term" value="F:coniferyl-alcohol dehydrogenase activity"/>
    <property type="evidence" value="ECO:0007669"/>
    <property type="project" value="RHEA"/>
</dbReference>
<dbReference type="GO" id="GO:0008270">
    <property type="term" value="F:zinc ion binding"/>
    <property type="evidence" value="ECO:0007669"/>
    <property type="project" value="InterPro"/>
</dbReference>
<dbReference type="GO" id="GO:0009809">
    <property type="term" value="P:lignin biosynthetic process"/>
    <property type="evidence" value="ECO:0007669"/>
    <property type="project" value="UniProtKB-KW"/>
</dbReference>
<dbReference type="CDD" id="cd05283">
    <property type="entry name" value="CAD1"/>
    <property type="match status" value="1"/>
</dbReference>
<dbReference type="FunFam" id="3.40.50.720:FF:000022">
    <property type="entry name" value="Cinnamyl alcohol dehydrogenase"/>
    <property type="match status" value="1"/>
</dbReference>
<dbReference type="FunFam" id="3.90.180.10:FF:000004">
    <property type="entry name" value="probable cinnamyl alcohol dehydrogenase"/>
    <property type="match status" value="1"/>
</dbReference>
<dbReference type="FunFam" id="3.90.180.10:FF:000100">
    <property type="entry name" value="Putative cinnamyl alcohol dehydrogenase 6"/>
    <property type="match status" value="1"/>
</dbReference>
<dbReference type="Gene3D" id="3.90.180.10">
    <property type="entry name" value="Medium-chain alcohol dehydrogenases, catalytic domain"/>
    <property type="match status" value="1"/>
</dbReference>
<dbReference type="Gene3D" id="3.40.50.720">
    <property type="entry name" value="NAD(P)-binding Rossmann-like Domain"/>
    <property type="match status" value="1"/>
</dbReference>
<dbReference type="InterPro" id="IPR013149">
    <property type="entry name" value="ADH-like_C"/>
</dbReference>
<dbReference type="InterPro" id="IPR013154">
    <property type="entry name" value="ADH-like_N"/>
</dbReference>
<dbReference type="InterPro" id="IPR002328">
    <property type="entry name" value="ADH_Zn_CS"/>
</dbReference>
<dbReference type="InterPro" id="IPR047109">
    <property type="entry name" value="CAD-like"/>
</dbReference>
<dbReference type="InterPro" id="IPR011032">
    <property type="entry name" value="GroES-like_sf"/>
</dbReference>
<dbReference type="InterPro" id="IPR036291">
    <property type="entry name" value="NAD(P)-bd_dom_sf"/>
</dbReference>
<dbReference type="InterPro" id="IPR020843">
    <property type="entry name" value="PKS_ER"/>
</dbReference>
<dbReference type="PANTHER" id="PTHR42683">
    <property type="entry name" value="ALDEHYDE REDUCTASE"/>
    <property type="match status" value="1"/>
</dbReference>
<dbReference type="Pfam" id="PF08240">
    <property type="entry name" value="ADH_N"/>
    <property type="match status" value="1"/>
</dbReference>
<dbReference type="Pfam" id="PF00107">
    <property type="entry name" value="ADH_zinc_N"/>
    <property type="match status" value="1"/>
</dbReference>
<dbReference type="SMART" id="SM00829">
    <property type="entry name" value="PKS_ER"/>
    <property type="match status" value="1"/>
</dbReference>
<dbReference type="SUPFAM" id="SSF50129">
    <property type="entry name" value="GroES-like"/>
    <property type="match status" value="1"/>
</dbReference>
<dbReference type="SUPFAM" id="SSF51735">
    <property type="entry name" value="NAD(P)-binding Rossmann-fold domains"/>
    <property type="match status" value="1"/>
</dbReference>
<dbReference type="PROSITE" id="PS00059">
    <property type="entry name" value="ADH_ZINC"/>
    <property type="match status" value="1"/>
</dbReference>
<reference key="1">
    <citation type="journal article" date="1993" name="Plant Mol. Biol.">
        <title>Molecular cloning, sequence analysis and elicitor-/ozone-induced accumulation of cinnamyl alcohol dehydrogenase from Norway spruce (Picea abies L.).</title>
        <authorList>
            <person name="Galliano H."/>
            <person name="Cabane M."/>
            <person name="Eckerskorn C."/>
            <person name="Lottspeich F."/>
            <person name="Sandermann H. Jr."/>
            <person name="Ernst D."/>
        </authorList>
    </citation>
    <scope>NUCLEOTIDE SEQUENCE [MRNA]</scope>
</reference>
<reference key="2">
    <citation type="journal article" date="1998" name="Trees">
        <title>The cinnamyl alcohol dehydrogenase gene family in Picea abies (L.) Karst.: genomic sequences, Southern hybridization, genetic analysis and phylogenetic relationships.</title>
        <authorList>
            <person name="Schubert R."/>
            <person name="Sperisen C."/>
            <person name="Mueller-Starck G."/>
            <person name="La Scala S."/>
            <person name="Ernst D."/>
            <person name="Sandermann H. Jr."/>
            <person name="Haeger K.-P."/>
        </authorList>
    </citation>
    <scope>NUCLEOTIDE SEQUENCE [GENOMIC DNA]</scope>
</reference>
<sequence length="357" mass="38777">MGSLESERTVTGYAARDSSGHLSPYTYTLRNKGPEDVIVRVIYCGICHSDLVQMHNEMGMSNYPMVPGHEVVGVVTEIGSEVKKFKVGEHVGVGCIVGSCRSCSNCNGSMEQYCSKRIWTYNDVNHDGTPTQGGFASSMVVDQMFVVRIPENLPLEQAAPLLCAGVTVYSPMKHFGMTEPGKKCGILGLGGVGHMGVKIAKAFGLHVTVISSSDKKKEEALEVLGADAYLVSKDAEKMQEAAESLDYIMDTIPVAHPLEPYLALLKTNGKLVMLGVVPEPLHFVTPLLILGRRSIAGSFIGSMEETQETLDFCAEKKVSSMIEVVGLDYINTAMERLVKNDVRYRFVVDVAASNLDK</sequence>
<protein>
    <recommendedName>
        <fullName>Probable cinnamyl alcohol dehydrogenase 7/8</fullName>
        <shortName>CAD 7/8</shortName>
        <ecNumber evidence="1">1.1.1.195</ecNumber>
    </recommendedName>
</protein>
<feature type="chain" id="PRO_0000160800" description="Probable cinnamyl alcohol dehydrogenase 7/8">
    <location>
        <begin position="1"/>
        <end position="357"/>
    </location>
</feature>
<feature type="binding site" evidence="1">
    <location>
        <position position="47"/>
    </location>
    <ligand>
        <name>Zn(2+)</name>
        <dbReference type="ChEBI" id="CHEBI:29105"/>
        <label>1</label>
        <note>catalytic</note>
    </ligand>
</feature>
<feature type="binding site" evidence="1">
    <location>
        <position position="49"/>
    </location>
    <ligand>
        <name>NADP(+)</name>
        <dbReference type="ChEBI" id="CHEBI:58349"/>
    </ligand>
</feature>
<feature type="binding site" evidence="1">
    <location>
        <position position="69"/>
    </location>
    <ligand>
        <name>Zn(2+)</name>
        <dbReference type="ChEBI" id="CHEBI:29105"/>
        <label>1</label>
        <note>catalytic</note>
    </ligand>
</feature>
<feature type="binding site" evidence="1">
    <location>
        <position position="70"/>
    </location>
    <ligand>
        <name>Zn(2+)</name>
        <dbReference type="ChEBI" id="CHEBI:29105"/>
        <label>1</label>
        <note>catalytic</note>
    </ligand>
</feature>
<feature type="binding site" evidence="1">
    <location>
        <position position="100"/>
    </location>
    <ligand>
        <name>Zn(2+)</name>
        <dbReference type="ChEBI" id="CHEBI:29105"/>
        <label>2</label>
    </ligand>
</feature>
<feature type="binding site" evidence="1">
    <location>
        <position position="103"/>
    </location>
    <ligand>
        <name>Zn(2+)</name>
        <dbReference type="ChEBI" id="CHEBI:29105"/>
        <label>2</label>
    </ligand>
</feature>
<feature type="binding site" evidence="1">
    <location>
        <position position="106"/>
    </location>
    <ligand>
        <name>Zn(2+)</name>
        <dbReference type="ChEBI" id="CHEBI:29105"/>
        <label>2</label>
    </ligand>
</feature>
<feature type="binding site" evidence="1">
    <location>
        <position position="114"/>
    </location>
    <ligand>
        <name>Zn(2+)</name>
        <dbReference type="ChEBI" id="CHEBI:29105"/>
        <label>2</label>
    </ligand>
</feature>
<feature type="binding site" evidence="1">
    <location>
        <position position="163"/>
    </location>
    <ligand>
        <name>Zn(2+)</name>
        <dbReference type="ChEBI" id="CHEBI:29105"/>
        <label>1</label>
        <note>catalytic</note>
    </ligand>
</feature>
<feature type="binding site" evidence="1">
    <location>
        <position position="167"/>
    </location>
    <ligand>
        <name>NADP(+)</name>
        <dbReference type="ChEBI" id="CHEBI:58349"/>
    </ligand>
</feature>
<feature type="binding site" evidence="1">
    <location>
        <begin position="188"/>
        <end position="193"/>
    </location>
    <ligand>
        <name>NADP(+)</name>
        <dbReference type="ChEBI" id="CHEBI:58349"/>
    </ligand>
</feature>
<feature type="binding site" evidence="1">
    <location>
        <begin position="211"/>
        <end position="216"/>
    </location>
    <ligand>
        <name>NADP(+)</name>
        <dbReference type="ChEBI" id="CHEBI:58349"/>
    </ligand>
</feature>
<feature type="binding site" evidence="1">
    <location>
        <position position="251"/>
    </location>
    <ligand>
        <name>NADP(+)</name>
        <dbReference type="ChEBI" id="CHEBI:58349"/>
    </ligand>
</feature>
<feature type="binding site" evidence="1">
    <location>
        <position position="275"/>
    </location>
    <ligand>
        <name>NADP(+)</name>
        <dbReference type="ChEBI" id="CHEBI:58349"/>
    </ligand>
</feature>
<feature type="binding site" evidence="1">
    <location>
        <begin position="298"/>
        <end position="300"/>
    </location>
    <ligand>
        <name>NADP(+)</name>
        <dbReference type="ChEBI" id="CHEBI:58349"/>
    </ligand>
</feature>